<organism>
    <name type="scientific">Rhodopseudomonas palustris (strain HaA2)</name>
    <dbReference type="NCBI Taxonomy" id="316058"/>
    <lineage>
        <taxon>Bacteria</taxon>
        <taxon>Pseudomonadati</taxon>
        <taxon>Pseudomonadota</taxon>
        <taxon>Alphaproteobacteria</taxon>
        <taxon>Hyphomicrobiales</taxon>
        <taxon>Nitrobacteraceae</taxon>
        <taxon>Rhodopseudomonas</taxon>
    </lineage>
</organism>
<name>AROQ_RHOP2</name>
<evidence type="ECO:0000255" key="1">
    <source>
        <dbReference type="HAMAP-Rule" id="MF_00169"/>
    </source>
</evidence>
<accession>Q2IVP0</accession>
<proteinExistence type="inferred from homology"/>
<dbReference type="EC" id="4.2.1.10" evidence="1"/>
<dbReference type="EMBL" id="CP000250">
    <property type="protein sequence ID" value="ABD07720.1"/>
    <property type="molecule type" value="Genomic_DNA"/>
</dbReference>
<dbReference type="RefSeq" id="WP_011441904.1">
    <property type="nucleotide sequence ID" value="NC_007778.1"/>
</dbReference>
<dbReference type="SMR" id="Q2IVP0"/>
<dbReference type="STRING" id="316058.RPB_3018"/>
<dbReference type="KEGG" id="rpb:RPB_3018"/>
<dbReference type="eggNOG" id="COG0757">
    <property type="taxonomic scope" value="Bacteria"/>
</dbReference>
<dbReference type="HOGENOM" id="CLU_090968_3_0_5"/>
<dbReference type="OrthoDB" id="9790793at2"/>
<dbReference type="UniPathway" id="UPA00053">
    <property type="reaction ID" value="UER00086"/>
</dbReference>
<dbReference type="Proteomes" id="UP000008809">
    <property type="component" value="Chromosome"/>
</dbReference>
<dbReference type="GO" id="GO:0003855">
    <property type="term" value="F:3-dehydroquinate dehydratase activity"/>
    <property type="evidence" value="ECO:0007669"/>
    <property type="project" value="UniProtKB-UniRule"/>
</dbReference>
<dbReference type="GO" id="GO:0008652">
    <property type="term" value="P:amino acid biosynthetic process"/>
    <property type="evidence" value="ECO:0007669"/>
    <property type="project" value="UniProtKB-KW"/>
</dbReference>
<dbReference type="GO" id="GO:0009073">
    <property type="term" value="P:aromatic amino acid family biosynthetic process"/>
    <property type="evidence" value="ECO:0007669"/>
    <property type="project" value="UniProtKB-KW"/>
</dbReference>
<dbReference type="GO" id="GO:0009423">
    <property type="term" value="P:chorismate biosynthetic process"/>
    <property type="evidence" value="ECO:0007669"/>
    <property type="project" value="UniProtKB-UniRule"/>
</dbReference>
<dbReference type="GO" id="GO:0019631">
    <property type="term" value="P:quinate catabolic process"/>
    <property type="evidence" value="ECO:0007669"/>
    <property type="project" value="TreeGrafter"/>
</dbReference>
<dbReference type="CDD" id="cd00466">
    <property type="entry name" value="DHQase_II"/>
    <property type="match status" value="1"/>
</dbReference>
<dbReference type="Gene3D" id="3.40.50.9100">
    <property type="entry name" value="Dehydroquinase, class II"/>
    <property type="match status" value="1"/>
</dbReference>
<dbReference type="HAMAP" id="MF_00169">
    <property type="entry name" value="AroQ"/>
    <property type="match status" value="1"/>
</dbReference>
<dbReference type="InterPro" id="IPR001874">
    <property type="entry name" value="DHquinase_II"/>
</dbReference>
<dbReference type="InterPro" id="IPR018509">
    <property type="entry name" value="DHquinase_II_CS"/>
</dbReference>
<dbReference type="InterPro" id="IPR036441">
    <property type="entry name" value="DHquinase_II_sf"/>
</dbReference>
<dbReference type="NCBIfam" id="TIGR01088">
    <property type="entry name" value="aroQ"/>
    <property type="match status" value="1"/>
</dbReference>
<dbReference type="NCBIfam" id="NF003805">
    <property type="entry name" value="PRK05395.1-2"/>
    <property type="match status" value="1"/>
</dbReference>
<dbReference type="NCBIfam" id="NF003806">
    <property type="entry name" value="PRK05395.1-3"/>
    <property type="match status" value="1"/>
</dbReference>
<dbReference type="NCBIfam" id="NF003807">
    <property type="entry name" value="PRK05395.1-4"/>
    <property type="match status" value="1"/>
</dbReference>
<dbReference type="PANTHER" id="PTHR21272">
    <property type="entry name" value="CATABOLIC 3-DEHYDROQUINASE"/>
    <property type="match status" value="1"/>
</dbReference>
<dbReference type="PANTHER" id="PTHR21272:SF3">
    <property type="entry name" value="CATABOLIC 3-DEHYDROQUINASE"/>
    <property type="match status" value="1"/>
</dbReference>
<dbReference type="Pfam" id="PF01220">
    <property type="entry name" value="DHquinase_II"/>
    <property type="match status" value="1"/>
</dbReference>
<dbReference type="PIRSF" id="PIRSF001399">
    <property type="entry name" value="DHquinase_II"/>
    <property type="match status" value="1"/>
</dbReference>
<dbReference type="SUPFAM" id="SSF52304">
    <property type="entry name" value="Type II 3-dehydroquinate dehydratase"/>
    <property type="match status" value="1"/>
</dbReference>
<dbReference type="PROSITE" id="PS01029">
    <property type="entry name" value="DEHYDROQUINASE_II"/>
    <property type="match status" value="1"/>
</dbReference>
<comment type="function">
    <text evidence="1">Catalyzes a trans-dehydration via an enolate intermediate.</text>
</comment>
<comment type="catalytic activity">
    <reaction evidence="1">
        <text>3-dehydroquinate = 3-dehydroshikimate + H2O</text>
        <dbReference type="Rhea" id="RHEA:21096"/>
        <dbReference type="ChEBI" id="CHEBI:15377"/>
        <dbReference type="ChEBI" id="CHEBI:16630"/>
        <dbReference type="ChEBI" id="CHEBI:32364"/>
        <dbReference type="EC" id="4.2.1.10"/>
    </reaction>
</comment>
<comment type="pathway">
    <text evidence="1">Metabolic intermediate biosynthesis; chorismate biosynthesis; chorismate from D-erythrose 4-phosphate and phosphoenolpyruvate: step 3/7.</text>
</comment>
<comment type="subunit">
    <text evidence="1">Homododecamer.</text>
</comment>
<comment type="similarity">
    <text evidence="1">Belongs to the type-II 3-dehydroquinase family.</text>
</comment>
<gene>
    <name evidence="1" type="primary">aroQ</name>
    <name type="ordered locus">RPB_3018</name>
</gene>
<reference key="1">
    <citation type="submission" date="2006-01" db="EMBL/GenBank/DDBJ databases">
        <title>Complete sequence of Rhodopseudomonas palustris HaA2.</title>
        <authorList>
            <consortium name="US DOE Joint Genome Institute"/>
            <person name="Copeland A."/>
            <person name="Lucas S."/>
            <person name="Lapidus A."/>
            <person name="Barry K."/>
            <person name="Detter J.C."/>
            <person name="Glavina T."/>
            <person name="Hammon N."/>
            <person name="Israni S."/>
            <person name="Pitluck S."/>
            <person name="Chain P."/>
            <person name="Malfatti S."/>
            <person name="Shin M."/>
            <person name="Vergez L."/>
            <person name="Schmutz J."/>
            <person name="Larimer F."/>
            <person name="Land M."/>
            <person name="Hauser L."/>
            <person name="Pelletier D.A."/>
            <person name="Kyrpides N."/>
            <person name="Anderson I."/>
            <person name="Oda Y."/>
            <person name="Harwood C.S."/>
            <person name="Richardson P."/>
        </authorList>
    </citation>
    <scope>NUCLEOTIDE SEQUENCE [LARGE SCALE GENOMIC DNA]</scope>
    <source>
        <strain>HaA2</strain>
    </source>
</reference>
<protein>
    <recommendedName>
        <fullName evidence="1">3-dehydroquinate dehydratase</fullName>
        <shortName evidence="1">3-dehydroquinase</shortName>
        <ecNumber evidence="1">4.2.1.10</ecNumber>
    </recommendedName>
    <alternativeName>
        <fullName evidence="1">Type II DHQase</fullName>
    </alternativeName>
</protein>
<sequence length="151" mass="15993">MPQTIYVLNGPNLNLLGTREPAIYGHATLADVERLCTETAASCGLSAVCRQSNHEGELIDWIHQARDEQAVGIVLNAGGYTHTSVALHDALVGVQIPAVEVHVSNVFARDSFRHHSFIAKAAFASLCGFGIDGYRLAILGLAAKIGTSAKA</sequence>
<keyword id="KW-0028">Amino-acid biosynthesis</keyword>
<keyword id="KW-0057">Aromatic amino acid biosynthesis</keyword>
<keyword id="KW-0456">Lyase</keyword>
<keyword id="KW-1185">Reference proteome</keyword>
<feature type="chain" id="PRO_1000023503" description="3-dehydroquinate dehydratase">
    <location>
        <begin position="1"/>
        <end position="151"/>
    </location>
</feature>
<feature type="active site" description="Proton acceptor" evidence="1">
    <location>
        <position position="24"/>
    </location>
</feature>
<feature type="active site" description="Proton donor" evidence="1">
    <location>
        <position position="102"/>
    </location>
</feature>
<feature type="binding site" evidence="1">
    <location>
        <position position="76"/>
    </location>
    <ligand>
        <name>substrate</name>
    </ligand>
</feature>
<feature type="binding site" evidence="1">
    <location>
        <position position="82"/>
    </location>
    <ligand>
        <name>substrate</name>
    </ligand>
</feature>
<feature type="binding site" evidence="1">
    <location>
        <position position="89"/>
    </location>
    <ligand>
        <name>substrate</name>
    </ligand>
</feature>
<feature type="binding site" evidence="1">
    <location>
        <begin position="103"/>
        <end position="104"/>
    </location>
    <ligand>
        <name>substrate</name>
    </ligand>
</feature>
<feature type="binding site" evidence="1">
    <location>
        <position position="113"/>
    </location>
    <ligand>
        <name>substrate</name>
    </ligand>
</feature>
<feature type="site" description="Transition state stabilizer" evidence="1">
    <location>
        <position position="19"/>
    </location>
</feature>